<name>ILVD_SHIF8</name>
<sequence>MPKYRSATTTHGRNMAGARALWRATGMTDADFGKPIIAVVNSFTQFVPGHVHLRDLGKLVAEQIEAAGGVAKEFNTIAVDDGIAMGHGGMLYSLPSRELIADSVEYMVNAHCADAMVCISNCDKITPGMLMASLRLNIPVIFVSGGPMEAGKTKLSDQIIKLDLVDAMIQGADPKVSDSQSDQVERSACPTCGSCSGMFTANSMNCLTEALGLSQPGNGSLLATHADRKQLFLNAGKRIVELTKRYYEQNDESALPRNIASKAAFENAMTLDIAMGGSTNTVLHLLAAAQEAEIDFTMSDIDKLSRKVPQLCKVAPSTQKYHMEDVHRAGGVIGILGELDRAGLLNRDVKNVLGLTLPQTLEQYDVMLTQDDAVKNMFRAGPAGIRTTQAFSQDCRWDSLDDDRANGCIRSLEHAYSKDGGLAVLYGNFAENGCIVKTAGVDDSILKFTGPAKVYESQDDAVEAILGGKVVAGDVVVIRYEGPKGGPGMQEMLYPTSFLKSMGLGKACALITDGRFSGGTSGLSIGHVSPEAASGGSIGLIEDGDLIAIDIPNRGIQLQVSDAELAARREAQEARGDKAWTPKNRERQVSFALRAYASLATSADKGAVRDKSKLGG</sequence>
<accession>Q0SYW3</accession>
<protein>
    <recommendedName>
        <fullName evidence="1">Dihydroxy-acid dehydratase</fullName>
        <shortName evidence="1">DAD</shortName>
        <ecNumber evidence="1">4.2.1.9</ecNumber>
    </recommendedName>
</protein>
<reference key="1">
    <citation type="journal article" date="2006" name="BMC Genomics">
        <title>Complete genome sequence of Shigella flexneri 5b and comparison with Shigella flexneri 2a.</title>
        <authorList>
            <person name="Nie H."/>
            <person name="Yang F."/>
            <person name="Zhang X."/>
            <person name="Yang J."/>
            <person name="Chen L."/>
            <person name="Wang J."/>
            <person name="Xiong Z."/>
            <person name="Peng J."/>
            <person name="Sun L."/>
            <person name="Dong J."/>
            <person name="Xue Y."/>
            <person name="Xu X."/>
            <person name="Chen S."/>
            <person name="Yao Z."/>
            <person name="Shen Y."/>
            <person name="Jin Q."/>
        </authorList>
    </citation>
    <scope>NUCLEOTIDE SEQUENCE [LARGE SCALE GENOMIC DNA]</scope>
    <source>
        <strain>8401</strain>
    </source>
</reference>
<feature type="chain" id="PRO_1000001060" description="Dihydroxy-acid dehydratase">
    <location>
        <begin position="1"/>
        <end position="616"/>
    </location>
</feature>
<feature type="active site" description="Proton acceptor" evidence="1">
    <location>
        <position position="517"/>
    </location>
</feature>
<feature type="binding site" evidence="1">
    <location>
        <position position="81"/>
    </location>
    <ligand>
        <name>Mg(2+)</name>
        <dbReference type="ChEBI" id="CHEBI:18420"/>
    </ligand>
</feature>
<feature type="binding site" evidence="1">
    <location>
        <position position="122"/>
    </location>
    <ligand>
        <name>[2Fe-2S] cluster</name>
        <dbReference type="ChEBI" id="CHEBI:190135"/>
    </ligand>
</feature>
<feature type="binding site" evidence="1">
    <location>
        <position position="123"/>
    </location>
    <ligand>
        <name>Mg(2+)</name>
        <dbReference type="ChEBI" id="CHEBI:18420"/>
    </ligand>
</feature>
<feature type="binding site" description="via carbamate group" evidence="1">
    <location>
        <position position="124"/>
    </location>
    <ligand>
        <name>Mg(2+)</name>
        <dbReference type="ChEBI" id="CHEBI:18420"/>
    </ligand>
</feature>
<feature type="binding site" evidence="1">
    <location>
        <position position="195"/>
    </location>
    <ligand>
        <name>[2Fe-2S] cluster</name>
        <dbReference type="ChEBI" id="CHEBI:190135"/>
    </ligand>
</feature>
<feature type="binding site" evidence="1">
    <location>
        <position position="491"/>
    </location>
    <ligand>
        <name>Mg(2+)</name>
        <dbReference type="ChEBI" id="CHEBI:18420"/>
    </ligand>
</feature>
<feature type="modified residue" description="N6-carboxylysine" evidence="1">
    <location>
        <position position="124"/>
    </location>
</feature>
<gene>
    <name evidence="1" type="primary">ilvD</name>
    <name type="ordered locus">SFV_3731</name>
</gene>
<dbReference type="EC" id="4.2.1.9" evidence="1"/>
<dbReference type="EMBL" id="CP000266">
    <property type="protein sequence ID" value="ABF05752.1"/>
    <property type="molecule type" value="Genomic_DNA"/>
</dbReference>
<dbReference type="RefSeq" id="WP_001127394.1">
    <property type="nucleotide sequence ID" value="NC_008258.1"/>
</dbReference>
<dbReference type="SMR" id="Q0SYW3"/>
<dbReference type="GeneID" id="75204762"/>
<dbReference type="KEGG" id="sfv:SFV_3731"/>
<dbReference type="HOGENOM" id="CLU_014271_4_2_6"/>
<dbReference type="UniPathway" id="UPA00047">
    <property type="reaction ID" value="UER00057"/>
</dbReference>
<dbReference type="UniPathway" id="UPA00049">
    <property type="reaction ID" value="UER00061"/>
</dbReference>
<dbReference type="Proteomes" id="UP000000659">
    <property type="component" value="Chromosome"/>
</dbReference>
<dbReference type="GO" id="GO:0005829">
    <property type="term" value="C:cytosol"/>
    <property type="evidence" value="ECO:0007669"/>
    <property type="project" value="TreeGrafter"/>
</dbReference>
<dbReference type="GO" id="GO:0051537">
    <property type="term" value="F:2 iron, 2 sulfur cluster binding"/>
    <property type="evidence" value="ECO:0007669"/>
    <property type="project" value="UniProtKB-UniRule"/>
</dbReference>
<dbReference type="GO" id="GO:0004160">
    <property type="term" value="F:dihydroxy-acid dehydratase activity"/>
    <property type="evidence" value="ECO:0007669"/>
    <property type="project" value="UniProtKB-UniRule"/>
</dbReference>
<dbReference type="GO" id="GO:0000287">
    <property type="term" value="F:magnesium ion binding"/>
    <property type="evidence" value="ECO:0007669"/>
    <property type="project" value="UniProtKB-UniRule"/>
</dbReference>
<dbReference type="GO" id="GO:0009097">
    <property type="term" value="P:isoleucine biosynthetic process"/>
    <property type="evidence" value="ECO:0007669"/>
    <property type="project" value="UniProtKB-UniRule"/>
</dbReference>
<dbReference type="GO" id="GO:0009099">
    <property type="term" value="P:L-valine biosynthetic process"/>
    <property type="evidence" value="ECO:0007669"/>
    <property type="project" value="UniProtKB-UniRule"/>
</dbReference>
<dbReference type="FunFam" id="3.50.30.80:FF:000001">
    <property type="entry name" value="Dihydroxy-acid dehydratase"/>
    <property type="match status" value="1"/>
</dbReference>
<dbReference type="Gene3D" id="3.50.30.80">
    <property type="entry name" value="IlvD/EDD C-terminal domain-like"/>
    <property type="match status" value="1"/>
</dbReference>
<dbReference type="HAMAP" id="MF_00012">
    <property type="entry name" value="IlvD"/>
    <property type="match status" value="1"/>
</dbReference>
<dbReference type="InterPro" id="IPR042096">
    <property type="entry name" value="Dihydro-acid_dehy_C"/>
</dbReference>
<dbReference type="InterPro" id="IPR004404">
    <property type="entry name" value="DihydroxyA_deHydtase"/>
</dbReference>
<dbReference type="InterPro" id="IPR020558">
    <property type="entry name" value="DiOHA_6PGluconate_deHydtase_CS"/>
</dbReference>
<dbReference type="InterPro" id="IPR056740">
    <property type="entry name" value="ILV_EDD_C"/>
</dbReference>
<dbReference type="InterPro" id="IPR000581">
    <property type="entry name" value="ILV_EDD_N"/>
</dbReference>
<dbReference type="InterPro" id="IPR037237">
    <property type="entry name" value="IlvD/EDD_N"/>
</dbReference>
<dbReference type="NCBIfam" id="TIGR00110">
    <property type="entry name" value="ilvD"/>
    <property type="match status" value="1"/>
</dbReference>
<dbReference type="NCBIfam" id="NF009103">
    <property type="entry name" value="PRK12448.1"/>
    <property type="match status" value="1"/>
</dbReference>
<dbReference type="PANTHER" id="PTHR43661">
    <property type="entry name" value="D-XYLONATE DEHYDRATASE"/>
    <property type="match status" value="1"/>
</dbReference>
<dbReference type="PANTHER" id="PTHR43661:SF3">
    <property type="entry name" value="D-XYLONATE DEHYDRATASE YAGF-RELATED"/>
    <property type="match status" value="1"/>
</dbReference>
<dbReference type="Pfam" id="PF24877">
    <property type="entry name" value="ILV_EDD_C"/>
    <property type="match status" value="1"/>
</dbReference>
<dbReference type="Pfam" id="PF00920">
    <property type="entry name" value="ILVD_EDD_N"/>
    <property type="match status" value="1"/>
</dbReference>
<dbReference type="SUPFAM" id="SSF143975">
    <property type="entry name" value="IlvD/EDD N-terminal domain-like"/>
    <property type="match status" value="1"/>
</dbReference>
<dbReference type="SUPFAM" id="SSF52016">
    <property type="entry name" value="LeuD/IlvD-like"/>
    <property type="match status" value="1"/>
</dbReference>
<dbReference type="PROSITE" id="PS00886">
    <property type="entry name" value="ILVD_EDD_1"/>
    <property type="match status" value="1"/>
</dbReference>
<dbReference type="PROSITE" id="PS00887">
    <property type="entry name" value="ILVD_EDD_2"/>
    <property type="match status" value="1"/>
</dbReference>
<comment type="function">
    <text evidence="1">Functions in the biosynthesis of branched-chain amino acids. Catalyzes the dehydration of (2R,3R)-2,3-dihydroxy-3-methylpentanoate (2,3-dihydroxy-3-methylvalerate) into 2-oxo-3-methylpentanoate (2-oxo-3-methylvalerate) and of (2R)-2,3-dihydroxy-3-methylbutanoate (2,3-dihydroxyisovalerate) into 2-oxo-3-methylbutanoate (2-oxoisovalerate), the penultimate precursor to L-isoleucine and L-valine, respectively.</text>
</comment>
<comment type="catalytic activity">
    <reaction evidence="1">
        <text>(2R)-2,3-dihydroxy-3-methylbutanoate = 3-methyl-2-oxobutanoate + H2O</text>
        <dbReference type="Rhea" id="RHEA:24809"/>
        <dbReference type="ChEBI" id="CHEBI:11851"/>
        <dbReference type="ChEBI" id="CHEBI:15377"/>
        <dbReference type="ChEBI" id="CHEBI:49072"/>
        <dbReference type="EC" id="4.2.1.9"/>
    </reaction>
    <physiologicalReaction direction="left-to-right" evidence="1">
        <dbReference type="Rhea" id="RHEA:24810"/>
    </physiologicalReaction>
</comment>
<comment type="catalytic activity">
    <reaction evidence="1">
        <text>(2R,3R)-2,3-dihydroxy-3-methylpentanoate = (S)-3-methyl-2-oxopentanoate + H2O</text>
        <dbReference type="Rhea" id="RHEA:27694"/>
        <dbReference type="ChEBI" id="CHEBI:15377"/>
        <dbReference type="ChEBI" id="CHEBI:35146"/>
        <dbReference type="ChEBI" id="CHEBI:49258"/>
        <dbReference type="EC" id="4.2.1.9"/>
    </reaction>
    <physiologicalReaction direction="left-to-right" evidence="1">
        <dbReference type="Rhea" id="RHEA:27695"/>
    </physiologicalReaction>
</comment>
<comment type="cofactor">
    <cofactor evidence="1">
        <name>[2Fe-2S] cluster</name>
        <dbReference type="ChEBI" id="CHEBI:190135"/>
    </cofactor>
    <text evidence="1">Binds 1 [2Fe-2S] cluster per subunit. This cluster acts as a Lewis acid cofactor.</text>
</comment>
<comment type="cofactor">
    <cofactor evidence="1">
        <name>Mg(2+)</name>
        <dbReference type="ChEBI" id="CHEBI:18420"/>
    </cofactor>
</comment>
<comment type="pathway">
    <text evidence="1">Amino-acid biosynthesis; L-isoleucine biosynthesis; L-isoleucine from 2-oxobutanoate: step 3/4.</text>
</comment>
<comment type="pathway">
    <text evidence="1">Amino-acid biosynthesis; L-valine biosynthesis; L-valine from pyruvate: step 3/4.</text>
</comment>
<comment type="subunit">
    <text evidence="1">Homodimer.</text>
</comment>
<comment type="similarity">
    <text evidence="1">Belongs to the IlvD/Edd family.</text>
</comment>
<proteinExistence type="inferred from homology"/>
<evidence type="ECO:0000255" key="1">
    <source>
        <dbReference type="HAMAP-Rule" id="MF_00012"/>
    </source>
</evidence>
<organism>
    <name type="scientific">Shigella flexneri serotype 5b (strain 8401)</name>
    <dbReference type="NCBI Taxonomy" id="373384"/>
    <lineage>
        <taxon>Bacteria</taxon>
        <taxon>Pseudomonadati</taxon>
        <taxon>Pseudomonadota</taxon>
        <taxon>Gammaproteobacteria</taxon>
        <taxon>Enterobacterales</taxon>
        <taxon>Enterobacteriaceae</taxon>
        <taxon>Shigella</taxon>
    </lineage>
</organism>
<keyword id="KW-0001">2Fe-2S</keyword>
<keyword id="KW-0028">Amino-acid biosynthesis</keyword>
<keyword id="KW-0100">Branched-chain amino acid biosynthesis</keyword>
<keyword id="KW-0408">Iron</keyword>
<keyword id="KW-0411">Iron-sulfur</keyword>
<keyword id="KW-0456">Lyase</keyword>
<keyword id="KW-0460">Magnesium</keyword>
<keyword id="KW-0479">Metal-binding</keyword>